<keyword id="KW-1185">Reference proteome</keyword>
<feature type="chain" id="PRO_1000083626" description="Protein ApaG">
    <location>
        <begin position="1"/>
        <end position="126"/>
    </location>
</feature>
<feature type="domain" description="ApaG" evidence="1">
    <location>
        <begin position="2"/>
        <end position="126"/>
    </location>
</feature>
<reference key="1">
    <citation type="journal article" date="2004" name="PLoS Biol.">
        <title>Genomic insights into methanotrophy: the complete genome sequence of Methylococcus capsulatus (Bath).</title>
        <authorList>
            <person name="Ward N.L."/>
            <person name="Larsen O."/>
            <person name="Sakwa J."/>
            <person name="Bruseth L."/>
            <person name="Khouri H.M."/>
            <person name="Durkin A.S."/>
            <person name="Dimitrov G."/>
            <person name="Jiang L."/>
            <person name="Scanlan D."/>
            <person name="Kang K.H."/>
            <person name="Lewis M.R."/>
            <person name="Nelson K.E."/>
            <person name="Methe B.A."/>
            <person name="Wu M."/>
            <person name="Heidelberg J.F."/>
            <person name="Paulsen I.T."/>
            <person name="Fouts D.E."/>
            <person name="Ravel J."/>
            <person name="Tettelin H."/>
            <person name="Ren Q."/>
            <person name="Read T.D."/>
            <person name="DeBoy R.T."/>
            <person name="Seshadri R."/>
            <person name="Salzberg S.L."/>
            <person name="Jensen H.B."/>
            <person name="Birkeland N.K."/>
            <person name="Nelson W.C."/>
            <person name="Dodson R.J."/>
            <person name="Grindhaug S.H."/>
            <person name="Holt I.E."/>
            <person name="Eidhammer I."/>
            <person name="Jonasen I."/>
            <person name="Vanaken S."/>
            <person name="Utterback T.R."/>
            <person name="Feldblyum T.V."/>
            <person name="Fraser C.M."/>
            <person name="Lillehaug J.R."/>
            <person name="Eisen J.A."/>
        </authorList>
    </citation>
    <scope>NUCLEOTIDE SEQUENCE [LARGE SCALE GENOMIC DNA]</scope>
    <source>
        <strain>ATCC 33009 / NCIMB 11132 / Bath</strain>
    </source>
</reference>
<organism>
    <name type="scientific">Methylococcus capsulatus (strain ATCC 33009 / NCIMB 11132 / Bath)</name>
    <dbReference type="NCBI Taxonomy" id="243233"/>
    <lineage>
        <taxon>Bacteria</taxon>
        <taxon>Pseudomonadati</taxon>
        <taxon>Pseudomonadota</taxon>
        <taxon>Gammaproteobacteria</taxon>
        <taxon>Methylococcales</taxon>
        <taxon>Methylococcaceae</taxon>
        <taxon>Methylococcus</taxon>
    </lineage>
</organism>
<dbReference type="EMBL" id="AE017282">
    <property type="protein sequence ID" value="AAU90606.1"/>
    <property type="molecule type" value="Genomic_DNA"/>
</dbReference>
<dbReference type="RefSeq" id="WP_010959606.1">
    <property type="nucleotide sequence ID" value="NC_002977.6"/>
</dbReference>
<dbReference type="SMR" id="Q60C69"/>
<dbReference type="STRING" id="243233.MCA0241"/>
<dbReference type="GeneID" id="88222586"/>
<dbReference type="KEGG" id="mca:MCA0241"/>
<dbReference type="eggNOG" id="COG2967">
    <property type="taxonomic scope" value="Bacteria"/>
</dbReference>
<dbReference type="HOGENOM" id="CLU_128074_1_0_6"/>
<dbReference type="Proteomes" id="UP000006821">
    <property type="component" value="Chromosome"/>
</dbReference>
<dbReference type="Gene3D" id="2.60.40.1470">
    <property type="entry name" value="ApaG domain"/>
    <property type="match status" value="1"/>
</dbReference>
<dbReference type="HAMAP" id="MF_00791">
    <property type="entry name" value="ApaG"/>
    <property type="match status" value="1"/>
</dbReference>
<dbReference type="InterPro" id="IPR050718">
    <property type="entry name" value="ApaG-like"/>
</dbReference>
<dbReference type="InterPro" id="IPR007474">
    <property type="entry name" value="ApaG_domain"/>
</dbReference>
<dbReference type="InterPro" id="IPR036767">
    <property type="entry name" value="ApaG_sf"/>
</dbReference>
<dbReference type="InterPro" id="IPR023065">
    <property type="entry name" value="Uncharacterised_ApaG"/>
</dbReference>
<dbReference type="NCBIfam" id="NF003967">
    <property type="entry name" value="PRK05461.1"/>
    <property type="match status" value="1"/>
</dbReference>
<dbReference type="PANTHER" id="PTHR47191">
    <property type="entry name" value="OS05G0170800 PROTEIN"/>
    <property type="match status" value="1"/>
</dbReference>
<dbReference type="PANTHER" id="PTHR47191:SF2">
    <property type="entry name" value="OS05G0170800 PROTEIN"/>
    <property type="match status" value="1"/>
</dbReference>
<dbReference type="Pfam" id="PF04379">
    <property type="entry name" value="DUF525"/>
    <property type="match status" value="1"/>
</dbReference>
<dbReference type="SUPFAM" id="SSF110069">
    <property type="entry name" value="ApaG-like"/>
    <property type="match status" value="1"/>
</dbReference>
<dbReference type="PROSITE" id="PS51087">
    <property type="entry name" value="APAG"/>
    <property type="match status" value="1"/>
</dbReference>
<protein>
    <recommendedName>
        <fullName evidence="1">Protein ApaG</fullName>
    </recommendedName>
</protein>
<name>APAG_METCA</name>
<evidence type="ECO:0000255" key="1">
    <source>
        <dbReference type="HAMAP-Rule" id="MF_00791"/>
    </source>
</evidence>
<accession>Q60C69</accession>
<gene>
    <name evidence="1" type="primary">apaG</name>
    <name type="ordered locus">MCA0241</name>
</gene>
<proteinExistence type="inferred from homology"/>
<sequence>MRRKPYELKVEVKAVYLREHSRPDAHQYTFAYTVTMENTGTVPAKLLGRRWIITDANGKTVEVVGEGVVGEHPYLRPGEAFEYTSAATIATPVGSMHGSYQLIADDGMPFEAPIAAFSLAIPRRLH</sequence>